<reference key="1">
    <citation type="journal article" date="2004" name="Gene">
        <title>Cloning, expression and subcellular localization of HN1 and HN1L genes, as well as characterization of their orthologs, defining an evolutionarily conserved gene family.</title>
        <authorList>
            <person name="Zhou G."/>
            <person name="Wang J."/>
            <person name="Zhang Y."/>
            <person name="Zhong C."/>
            <person name="Ni J."/>
            <person name="Wang L."/>
            <person name="Guo J."/>
            <person name="Zhang K."/>
            <person name="Yu L."/>
            <person name="Zhao S."/>
        </authorList>
    </citation>
    <scope>NUCLEOTIDE SEQUENCE [GENOMIC DNA / MRNA] (ISOFORMS 1 AND 2)</scope>
    <scope>SUBCELLULAR LOCATION</scope>
    <scope>TISSUE SPECIFICITY</scope>
    <source>
        <tissue>Brain</tissue>
        <tissue>Liver</tissue>
    </source>
</reference>
<reference key="2">
    <citation type="journal article" date="2004" name="Oncogene">
        <title>Suppression subtractive hybridization and expression profiling identifies a unique set of genes overexpressed in non-small-cell lung cancer.</title>
        <authorList>
            <person name="Petroziello J."/>
            <person name="Yamane A."/>
            <person name="Westendorf L."/>
            <person name="Thompson M."/>
            <person name="McDonagh C."/>
            <person name="Cerveny C."/>
            <person name="Law C.-L."/>
            <person name="Wahl A."/>
            <person name="Carter P."/>
        </authorList>
    </citation>
    <scope>NUCLEOTIDE SEQUENCE [MRNA] (ISOFORM 1)</scope>
    <scope>INDUCTION</scope>
    <scope>SUBCELLULAR LOCATION</scope>
</reference>
<reference key="3">
    <citation type="journal article" date="2004" name="Nat. Genet.">
        <title>Complete sequencing and characterization of 21,243 full-length human cDNAs.</title>
        <authorList>
            <person name="Ota T."/>
            <person name="Suzuki Y."/>
            <person name="Nishikawa T."/>
            <person name="Otsuki T."/>
            <person name="Sugiyama T."/>
            <person name="Irie R."/>
            <person name="Wakamatsu A."/>
            <person name="Hayashi K."/>
            <person name="Sato H."/>
            <person name="Nagai K."/>
            <person name="Kimura K."/>
            <person name="Makita H."/>
            <person name="Sekine M."/>
            <person name="Obayashi M."/>
            <person name="Nishi T."/>
            <person name="Shibahara T."/>
            <person name="Tanaka T."/>
            <person name="Ishii S."/>
            <person name="Yamamoto J."/>
            <person name="Saito K."/>
            <person name="Kawai Y."/>
            <person name="Isono Y."/>
            <person name="Nakamura Y."/>
            <person name="Nagahari K."/>
            <person name="Murakami K."/>
            <person name="Yasuda T."/>
            <person name="Iwayanagi T."/>
            <person name="Wagatsuma M."/>
            <person name="Shiratori A."/>
            <person name="Sudo H."/>
            <person name="Hosoiri T."/>
            <person name="Kaku Y."/>
            <person name="Kodaira H."/>
            <person name="Kondo H."/>
            <person name="Sugawara M."/>
            <person name="Takahashi M."/>
            <person name="Kanda K."/>
            <person name="Yokoi T."/>
            <person name="Furuya T."/>
            <person name="Kikkawa E."/>
            <person name="Omura Y."/>
            <person name="Abe K."/>
            <person name="Kamihara K."/>
            <person name="Katsuta N."/>
            <person name="Sato K."/>
            <person name="Tanikawa M."/>
            <person name="Yamazaki M."/>
            <person name="Ninomiya K."/>
            <person name="Ishibashi T."/>
            <person name="Yamashita H."/>
            <person name="Murakawa K."/>
            <person name="Fujimori K."/>
            <person name="Tanai H."/>
            <person name="Kimata M."/>
            <person name="Watanabe M."/>
            <person name="Hiraoka S."/>
            <person name="Chiba Y."/>
            <person name="Ishida S."/>
            <person name="Ono Y."/>
            <person name="Takiguchi S."/>
            <person name="Watanabe S."/>
            <person name="Yosida M."/>
            <person name="Hotuta T."/>
            <person name="Kusano J."/>
            <person name="Kanehori K."/>
            <person name="Takahashi-Fujii A."/>
            <person name="Hara H."/>
            <person name="Tanase T.-O."/>
            <person name="Nomura Y."/>
            <person name="Togiya S."/>
            <person name="Komai F."/>
            <person name="Hara R."/>
            <person name="Takeuchi K."/>
            <person name="Arita M."/>
            <person name="Imose N."/>
            <person name="Musashino K."/>
            <person name="Yuuki H."/>
            <person name="Oshima A."/>
            <person name="Sasaki N."/>
            <person name="Aotsuka S."/>
            <person name="Yoshikawa Y."/>
            <person name="Matsunawa H."/>
            <person name="Ichihara T."/>
            <person name="Shiohata N."/>
            <person name="Sano S."/>
            <person name="Moriya S."/>
            <person name="Momiyama H."/>
            <person name="Satoh N."/>
            <person name="Takami S."/>
            <person name="Terashima Y."/>
            <person name="Suzuki O."/>
            <person name="Nakagawa S."/>
            <person name="Senoh A."/>
            <person name="Mizoguchi H."/>
            <person name="Goto Y."/>
            <person name="Shimizu F."/>
            <person name="Wakebe H."/>
            <person name="Hishigaki H."/>
            <person name="Watanabe T."/>
            <person name="Sugiyama A."/>
            <person name="Takemoto M."/>
            <person name="Kawakami B."/>
            <person name="Yamazaki M."/>
            <person name="Watanabe K."/>
            <person name="Kumagai A."/>
            <person name="Itakura S."/>
            <person name="Fukuzumi Y."/>
            <person name="Fujimori Y."/>
            <person name="Komiyama M."/>
            <person name="Tashiro H."/>
            <person name="Tanigami A."/>
            <person name="Fujiwara T."/>
            <person name="Ono T."/>
            <person name="Yamada K."/>
            <person name="Fujii Y."/>
            <person name="Ozaki K."/>
            <person name="Hirao M."/>
            <person name="Ohmori Y."/>
            <person name="Kawabata A."/>
            <person name="Hikiji T."/>
            <person name="Kobatake N."/>
            <person name="Inagaki H."/>
            <person name="Ikema Y."/>
            <person name="Okamoto S."/>
            <person name="Okitani R."/>
            <person name="Kawakami T."/>
            <person name="Noguchi S."/>
            <person name="Itoh T."/>
            <person name="Shigeta K."/>
            <person name="Senba T."/>
            <person name="Matsumura K."/>
            <person name="Nakajima Y."/>
            <person name="Mizuno T."/>
            <person name="Morinaga M."/>
            <person name="Sasaki M."/>
            <person name="Togashi T."/>
            <person name="Oyama M."/>
            <person name="Hata H."/>
            <person name="Watanabe M."/>
            <person name="Komatsu T."/>
            <person name="Mizushima-Sugano J."/>
            <person name="Satoh T."/>
            <person name="Shirai Y."/>
            <person name="Takahashi Y."/>
            <person name="Nakagawa K."/>
            <person name="Okumura K."/>
            <person name="Nagase T."/>
            <person name="Nomura N."/>
            <person name="Kikuchi H."/>
            <person name="Masuho Y."/>
            <person name="Yamashita R."/>
            <person name="Nakai K."/>
            <person name="Yada T."/>
            <person name="Nakamura Y."/>
            <person name="Ohara O."/>
            <person name="Isogai T."/>
            <person name="Sugano S."/>
        </authorList>
    </citation>
    <scope>NUCLEOTIDE SEQUENCE [LARGE SCALE MRNA] (ISOFORMS 1 AND 3)</scope>
    <source>
        <tissue>Teratocarcinoma</tissue>
        <tissue>Tongue</tissue>
    </source>
</reference>
<reference key="4">
    <citation type="journal article" date="2001" name="Hum. Mol. Genet.">
        <title>Sequence, structure and pathology of the fully annotated terminal 2 Mb of the short arm of human chromosome 16.</title>
        <authorList>
            <person name="Daniels R.J."/>
            <person name="Peden J.F."/>
            <person name="Lloyd C."/>
            <person name="Horsley S.W."/>
            <person name="Clark K."/>
            <person name="Tufarelli C."/>
            <person name="Kearney L."/>
            <person name="Buckle V.J."/>
            <person name="Doggett N.A."/>
            <person name="Flint J."/>
            <person name="Higgs D.R."/>
        </authorList>
    </citation>
    <scope>NUCLEOTIDE SEQUENCE [LARGE SCALE GENOMIC DNA]</scope>
</reference>
<reference key="5">
    <citation type="journal article" date="2004" name="Nature">
        <title>The sequence and analysis of duplication-rich human chromosome 16.</title>
        <authorList>
            <person name="Martin J."/>
            <person name="Han C."/>
            <person name="Gordon L.A."/>
            <person name="Terry A."/>
            <person name="Prabhakar S."/>
            <person name="She X."/>
            <person name="Xie G."/>
            <person name="Hellsten U."/>
            <person name="Chan Y.M."/>
            <person name="Altherr M."/>
            <person name="Couronne O."/>
            <person name="Aerts A."/>
            <person name="Bajorek E."/>
            <person name="Black S."/>
            <person name="Blumer H."/>
            <person name="Branscomb E."/>
            <person name="Brown N.C."/>
            <person name="Bruno W.J."/>
            <person name="Buckingham J.M."/>
            <person name="Callen D.F."/>
            <person name="Campbell C.S."/>
            <person name="Campbell M.L."/>
            <person name="Campbell E.W."/>
            <person name="Caoile C."/>
            <person name="Challacombe J.F."/>
            <person name="Chasteen L.A."/>
            <person name="Chertkov O."/>
            <person name="Chi H.C."/>
            <person name="Christensen M."/>
            <person name="Clark L.M."/>
            <person name="Cohn J.D."/>
            <person name="Denys M."/>
            <person name="Detter J.C."/>
            <person name="Dickson M."/>
            <person name="Dimitrijevic-Bussod M."/>
            <person name="Escobar J."/>
            <person name="Fawcett J.J."/>
            <person name="Flowers D."/>
            <person name="Fotopulos D."/>
            <person name="Glavina T."/>
            <person name="Gomez M."/>
            <person name="Gonzales E."/>
            <person name="Goodstein D."/>
            <person name="Goodwin L.A."/>
            <person name="Grady D.L."/>
            <person name="Grigoriev I."/>
            <person name="Groza M."/>
            <person name="Hammon N."/>
            <person name="Hawkins T."/>
            <person name="Haydu L."/>
            <person name="Hildebrand C.E."/>
            <person name="Huang W."/>
            <person name="Israni S."/>
            <person name="Jett J."/>
            <person name="Jewett P.B."/>
            <person name="Kadner K."/>
            <person name="Kimball H."/>
            <person name="Kobayashi A."/>
            <person name="Krawczyk M.-C."/>
            <person name="Leyba T."/>
            <person name="Longmire J.L."/>
            <person name="Lopez F."/>
            <person name="Lou Y."/>
            <person name="Lowry S."/>
            <person name="Ludeman T."/>
            <person name="Manohar C.F."/>
            <person name="Mark G.A."/>
            <person name="McMurray K.L."/>
            <person name="Meincke L.J."/>
            <person name="Morgan J."/>
            <person name="Moyzis R.K."/>
            <person name="Mundt M.O."/>
            <person name="Munk A.C."/>
            <person name="Nandkeshwar R.D."/>
            <person name="Pitluck S."/>
            <person name="Pollard M."/>
            <person name="Predki P."/>
            <person name="Parson-Quintana B."/>
            <person name="Ramirez L."/>
            <person name="Rash S."/>
            <person name="Retterer J."/>
            <person name="Ricke D.O."/>
            <person name="Robinson D.L."/>
            <person name="Rodriguez A."/>
            <person name="Salamov A."/>
            <person name="Saunders E.H."/>
            <person name="Scott D."/>
            <person name="Shough T."/>
            <person name="Stallings R.L."/>
            <person name="Stalvey M."/>
            <person name="Sutherland R.D."/>
            <person name="Tapia R."/>
            <person name="Tesmer J.G."/>
            <person name="Thayer N."/>
            <person name="Thompson L.S."/>
            <person name="Tice H."/>
            <person name="Torney D.C."/>
            <person name="Tran-Gyamfi M."/>
            <person name="Tsai M."/>
            <person name="Ulanovsky L.E."/>
            <person name="Ustaszewska A."/>
            <person name="Vo N."/>
            <person name="White P.S."/>
            <person name="Williams A.L."/>
            <person name="Wills P.L."/>
            <person name="Wu J.-R."/>
            <person name="Wu K."/>
            <person name="Yang J."/>
            <person name="DeJong P."/>
            <person name="Bruce D."/>
            <person name="Doggett N.A."/>
            <person name="Deaven L."/>
            <person name="Schmutz J."/>
            <person name="Grimwood J."/>
            <person name="Richardson P."/>
            <person name="Rokhsar D.S."/>
            <person name="Eichler E.E."/>
            <person name="Gilna P."/>
            <person name="Lucas S.M."/>
            <person name="Myers R.M."/>
            <person name="Rubin E.M."/>
            <person name="Pennacchio L.A."/>
        </authorList>
    </citation>
    <scope>NUCLEOTIDE SEQUENCE [LARGE SCALE GENOMIC DNA]</scope>
</reference>
<reference key="6">
    <citation type="submission" date="2005-09" db="EMBL/GenBank/DDBJ databases">
        <authorList>
            <person name="Mural R.J."/>
            <person name="Istrail S."/>
            <person name="Sutton G.G."/>
            <person name="Florea L."/>
            <person name="Halpern A.L."/>
            <person name="Mobarry C.M."/>
            <person name="Lippert R."/>
            <person name="Walenz B."/>
            <person name="Shatkay H."/>
            <person name="Dew I."/>
            <person name="Miller J.R."/>
            <person name="Flanigan M.J."/>
            <person name="Edwards N.J."/>
            <person name="Bolanos R."/>
            <person name="Fasulo D."/>
            <person name="Halldorsson B.V."/>
            <person name="Hannenhalli S."/>
            <person name="Turner R."/>
            <person name="Yooseph S."/>
            <person name="Lu F."/>
            <person name="Nusskern D.R."/>
            <person name="Shue B.C."/>
            <person name="Zheng X.H."/>
            <person name="Zhong F."/>
            <person name="Delcher A.L."/>
            <person name="Huson D.H."/>
            <person name="Kravitz S.A."/>
            <person name="Mouchard L."/>
            <person name="Reinert K."/>
            <person name="Remington K.A."/>
            <person name="Clark A.G."/>
            <person name="Waterman M.S."/>
            <person name="Eichler E.E."/>
            <person name="Adams M.D."/>
            <person name="Hunkapiller M.W."/>
            <person name="Myers E.W."/>
            <person name="Venter J.C."/>
        </authorList>
    </citation>
    <scope>NUCLEOTIDE SEQUENCE [LARGE SCALE GENOMIC DNA]</scope>
</reference>
<reference key="7">
    <citation type="journal article" date="2004" name="Genome Res.">
        <title>The status, quality, and expansion of the NIH full-length cDNA project: the Mammalian Gene Collection (MGC).</title>
        <authorList>
            <consortium name="The MGC Project Team"/>
        </authorList>
    </citation>
    <scope>NUCLEOTIDE SEQUENCE [LARGE SCALE MRNA] (ISOFORM 1)</scope>
    <source>
        <tissue>Skin</tissue>
        <tissue>Testis</tissue>
    </source>
</reference>
<reference key="8">
    <citation type="journal article" date="2007" name="J. Proteome Res.">
        <title>Improved titanium dioxide enrichment of phosphopeptides from HeLa cells and high confident phosphopeptide identification by cross-validation of MS/MS and MS/MS/MS spectra.</title>
        <authorList>
            <person name="Yu L.R."/>
            <person name="Zhu Z."/>
            <person name="Chan K.C."/>
            <person name="Issaq H.J."/>
            <person name="Dimitrov D.S."/>
            <person name="Veenstra T.D."/>
        </authorList>
    </citation>
    <scope>PHOSPHORYLATION [LARGE SCALE ANALYSIS] AT SER-97</scope>
    <scope>IDENTIFICATION BY MASS SPECTROMETRY [LARGE SCALE ANALYSIS]</scope>
    <source>
        <tissue>Cervix carcinoma</tissue>
    </source>
</reference>
<reference key="9">
    <citation type="journal article" date="2008" name="J. Proteome Res.">
        <title>Combining protein-based IMAC, peptide-based IMAC, and MudPIT for efficient phosphoproteomic analysis.</title>
        <authorList>
            <person name="Cantin G.T."/>
            <person name="Yi W."/>
            <person name="Lu B."/>
            <person name="Park S.K."/>
            <person name="Xu T."/>
            <person name="Lee J.-D."/>
            <person name="Yates J.R. III"/>
        </authorList>
    </citation>
    <scope>PHOSPHORYLATION [LARGE SCALE ANALYSIS] AT SER-97</scope>
    <scope>IDENTIFICATION BY MASS SPECTROMETRY [LARGE SCALE ANALYSIS]</scope>
    <source>
        <tissue>Cervix carcinoma</tissue>
    </source>
</reference>
<reference key="10">
    <citation type="journal article" date="2008" name="Proc. Natl. Acad. Sci. U.S.A.">
        <title>A quantitative atlas of mitotic phosphorylation.</title>
        <authorList>
            <person name="Dephoure N."/>
            <person name="Zhou C."/>
            <person name="Villen J."/>
            <person name="Beausoleil S.A."/>
            <person name="Bakalarski C.E."/>
            <person name="Elledge S.J."/>
            <person name="Gygi S.P."/>
        </authorList>
    </citation>
    <scope>PHOSPHORYLATION [LARGE SCALE ANALYSIS] AT SER-30; THR-35; SER-97 AND SER-144</scope>
    <scope>IDENTIFICATION BY MASS SPECTROMETRY [LARGE SCALE ANALYSIS]</scope>
    <source>
        <tissue>Cervix carcinoma</tissue>
    </source>
</reference>
<reference key="11">
    <citation type="journal article" date="2009" name="Anal. Chem.">
        <title>Lys-N and trypsin cover complementary parts of the phosphoproteome in a refined SCX-based approach.</title>
        <authorList>
            <person name="Gauci S."/>
            <person name="Helbig A.O."/>
            <person name="Slijper M."/>
            <person name="Krijgsveld J."/>
            <person name="Heck A.J."/>
            <person name="Mohammed S."/>
        </authorList>
    </citation>
    <scope>IDENTIFICATION BY MASS SPECTROMETRY [LARGE SCALE ANALYSIS]</scope>
</reference>
<reference key="12">
    <citation type="journal article" date="2009" name="Sci. Signal.">
        <title>Quantitative phosphoproteomic analysis of T cell receptor signaling reveals system-wide modulation of protein-protein interactions.</title>
        <authorList>
            <person name="Mayya V."/>
            <person name="Lundgren D.H."/>
            <person name="Hwang S.-I."/>
            <person name="Rezaul K."/>
            <person name="Wu L."/>
            <person name="Eng J.K."/>
            <person name="Rodionov V."/>
            <person name="Han D.K."/>
        </authorList>
    </citation>
    <scope>PHOSPHORYLATION [LARGE SCALE ANALYSIS] AT SER-97</scope>
    <scope>IDENTIFICATION BY MASS SPECTROMETRY [LARGE SCALE ANALYSIS]</scope>
    <source>
        <tissue>Leukemic T-cell</tissue>
    </source>
</reference>
<reference key="13">
    <citation type="journal article" date="2010" name="Sci. Signal.">
        <title>Quantitative phosphoproteomics reveals widespread full phosphorylation site occupancy during mitosis.</title>
        <authorList>
            <person name="Olsen J.V."/>
            <person name="Vermeulen M."/>
            <person name="Santamaria A."/>
            <person name="Kumar C."/>
            <person name="Miller M.L."/>
            <person name="Jensen L.J."/>
            <person name="Gnad F."/>
            <person name="Cox J."/>
            <person name="Jensen T.S."/>
            <person name="Nigg E.A."/>
            <person name="Brunak S."/>
            <person name="Mann M."/>
        </authorList>
    </citation>
    <scope>PHOSPHORYLATION [LARGE SCALE ANALYSIS] AT SER-97</scope>
    <scope>IDENTIFICATION BY MASS SPECTROMETRY [LARGE SCALE ANALYSIS]</scope>
    <source>
        <tissue>Cervix carcinoma</tissue>
    </source>
</reference>
<reference key="14">
    <citation type="journal article" date="2011" name="BMC Syst. Biol.">
        <title>Initial characterization of the human central proteome.</title>
        <authorList>
            <person name="Burkard T.R."/>
            <person name="Planyavsky M."/>
            <person name="Kaupe I."/>
            <person name="Breitwieser F.P."/>
            <person name="Buerckstuemmer T."/>
            <person name="Bennett K.L."/>
            <person name="Superti-Furga G."/>
            <person name="Colinge J."/>
        </authorList>
    </citation>
    <scope>IDENTIFICATION BY MASS SPECTROMETRY [LARGE SCALE ANALYSIS]</scope>
</reference>
<reference key="15">
    <citation type="journal article" date="2011" name="Sci. Signal.">
        <title>System-wide temporal characterization of the proteome and phosphoproteome of human embryonic stem cell differentiation.</title>
        <authorList>
            <person name="Rigbolt K.T."/>
            <person name="Prokhorova T.A."/>
            <person name="Akimov V."/>
            <person name="Henningsen J."/>
            <person name="Johansen P.T."/>
            <person name="Kratchmarova I."/>
            <person name="Kassem M."/>
            <person name="Mann M."/>
            <person name="Olsen J.V."/>
            <person name="Blagoev B."/>
        </authorList>
    </citation>
    <scope>PHOSPHORYLATION [LARGE SCALE ANALYSIS] AT SER-132</scope>
    <scope>IDENTIFICATION BY MASS SPECTROMETRY [LARGE SCALE ANALYSIS]</scope>
</reference>
<reference key="16">
    <citation type="journal article" date="2012" name="Proc. Natl. Acad. Sci. U.S.A.">
        <title>N-terminal acetylome analyses and functional insights of the N-terminal acetyltransferase NatB.</title>
        <authorList>
            <person name="Van Damme P."/>
            <person name="Lasa M."/>
            <person name="Polevoda B."/>
            <person name="Gazquez C."/>
            <person name="Elosegui-Artola A."/>
            <person name="Kim D.S."/>
            <person name="De Juan-Pardo E."/>
            <person name="Demeyer K."/>
            <person name="Hole K."/>
            <person name="Larrea E."/>
            <person name="Timmerman E."/>
            <person name="Prieto J."/>
            <person name="Arnesen T."/>
            <person name="Sherman F."/>
            <person name="Gevaert K."/>
            <person name="Aldabe R."/>
        </authorList>
    </citation>
    <scope>ACETYLATION [LARGE SCALE ANALYSIS] AT MET-1</scope>
    <scope>IDENTIFICATION BY MASS SPECTROMETRY [LARGE SCALE ANALYSIS]</scope>
</reference>
<reference key="17">
    <citation type="journal article" date="2013" name="J. Proteome Res.">
        <title>Toward a comprehensive characterization of a human cancer cell phosphoproteome.</title>
        <authorList>
            <person name="Zhou H."/>
            <person name="Di Palma S."/>
            <person name="Preisinger C."/>
            <person name="Peng M."/>
            <person name="Polat A.N."/>
            <person name="Heck A.J."/>
            <person name="Mohammed S."/>
        </authorList>
    </citation>
    <scope>PHOSPHORYLATION [LARGE SCALE ANALYSIS] AT SER-45; SER-69; SER-97; SER-132 AND SER-144</scope>
    <scope>IDENTIFICATION BY MASS SPECTROMETRY [LARGE SCALE ANALYSIS]</scope>
    <source>
        <tissue>Cervix carcinoma</tissue>
        <tissue>Erythroleukemia</tissue>
    </source>
</reference>
<reference key="18">
    <citation type="journal article" date="2021" name="Sci. Signal.">
        <title>Essential requirement for JPT2 in NAADP-evoked Ca2+ signaling.</title>
        <authorList>
            <person name="Gunaratne G.S."/>
            <person name="Brailoiu E."/>
            <person name="He S."/>
            <person name="Unterwald E.M."/>
            <person name="Patel S."/>
            <person name="Slama J.T."/>
            <person name="Walseth T.F."/>
            <person name="Marchant J.S."/>
        </authorList>
    </citation>
    <scope>FUNCTION</scope>
    <scope>FUNCTION (MICROBIAL INFECTION)</scope>
    <scope>SUBUNIT</scope>
    <scope>INTERACTION WITH TPCN1</scope>
</reference>
<reference key="19">
    <citation type="journal article" date="2021" name="Sci. Signal.">
        <title>HN1L/JPT2: A signaling protein that connects NAADP generation to Ca2+ microdomain formation.</title>
        <authorList>
            <person name="Roggenkamp H.G."/>
            <person name="Khansahib I."/>
            <person name="Hernandez C.L.C."/>
            <person name="Zhang Y."/>
            <person name="Lodygin D."/>
            <person name="Krueger A."/>
            <person name="Gu F."/>
            <person name="Moeckl F."/>
            <person name="Loehndorf A."/>
            <person name="Wolters V."/>
            <person name="Woike D."/>
            <person name="Rosche A."/>
            <person name="Bauche A."/>
            <person name="Schetelig D."/>
            <person name="Werner R."/>
            <person name="Schlueter H."/>
            <person name="Failla A.V."/>
            <person name="Meier C."/>
            <person name="Fliegert R."/>
            <person name="Walseth T.F."/>
            <person name="Fluegel A."/>
            <person name="Diercks B.P."/>
            <person name="Guse A.H."/>
        </authorList>
    </citation>
    <scope>FUNCTION</scope>
    <scope>SUBUNIT</scope>
    <scope>SUBCELLULAR LOCATION</scope>
</reference>
<organism>
    <name type="scientific">Homo sapiens</name>
    <name type="common">Human</name>
    <dbReference type="NCBI Taxonomy" id="9606"/>
    <lineage>
        <taxon>Eukaryota</taxon>
        <taxon>Metazoa</taxon>
        <taxon>Chordata</taxon>
        <taxon>Craniata</taxon>
        <taxon>Vertebrata</taxon>
        <taxon>Euteleostomi</taxon>
        <taxon>Mammalia</taxon>
        <taxon>Eutheria</taxon>
        <taxon>Euarchontoglires</taxon>
        <taxon>Primates</taxon>
        <taxon>Haplorrhini</taxon>
        <taxon>Catarrhini</taxon>
        <taxon>Hominidae</taxon>
        <taxon>Homo</taxon>
    </lineage>
</organism>
<name>JUPI2_HUMAN</name>
<feature type="chain" id="PRO_0000054921" description="Jupiter microtubule associated homolog 2">
    <location>
        <begin position="1"/>
        <end position="190"/>
    </location>
</feature>
<feature type="region of interest" description="Disordered" evidence="1">
    <location>
        <begin position="1"/>
        <end position="190"/>
    </location>
</feature>
<feature type="compositionally biased region" description="Polar residues" evidence="1">
    <location>
        <begin position="35"/>
        <end position="44"/>
    </location>
</feature>
<feature type="compositionally biased region" description="Basic and acidic residues" evidence="1">
    <location>
        <begin position="110"/>
        <end position="129"/>
    </location>
</feature>
<feature type="compositionally biased region" description="Basic and acidic residues" evidence="1">
    <location>
        <begin position="139"/>
        <end position="167"/>
    </location>
</feature>
<feature type="modified residue" description="N-acetylmethionine" evidence="16">
    <location>
        <position position="1"/>
    </location>
</feature>
<feature type="modified residue" description="Phosphoserine" evidence="12">
    <location>
        <position position="30"/>
    </location>
</feature>
<feature type="modified residue" description="Phosphothreonine" evidence="12">
    <location>
        <position position="35"/>
    </location>
</feature>
<feature type="modified residue" description="Phosphoserine" evidence="17">
    <location>
        <position position="45"/>
    </location>
</feature>
<feature type="modified residue" description="Phosphoserine" evidence="17">
    <location>
        <position position="69"/>
    </location>
</feature>
<feature type="modified residue" description="Phosphoserine" evidence="10 11 12 13 14 17">
    <location>
        <position position="97"/>
    </location>
</feature>
<feature type="modified residue" description="Phosphoserine" evidence="15 17">
    <location>
        <position position="132"/>
    </location>
</feature>
<feature type="modified residue" description="Phosphoserine" evidence="12 17">
    <location>
        <position position="144"/>
    </location>
</feature>
<feature type="splice variant" id="VSP_014706" description="In isoform 2." evidence="7">
    <original>MFQVPDSEGGRAGSRAM</original>
    <variation>M</variation>
    <location>
        <begin position="1"/>
        <end position="17"/>
    </location>
</feature>
<feature type="splice variant" id="VSP_057423" description="In isoform 3." evidence="6">
    <original>S</original>
    <variation>SRKWQLLTGSLASTSPSLLSGQGPWAPLQ</variation>
    <location>
        <position position="14"/>
    </location>
</feature>
<protein>
    <recommendedName>
        <fullName evidence="9">Jupiter microtubule associated homolog 2</fullName>
    </recommendedName>
    <alternativeName>
        <fullName evidence="7">Hematological and neurological expressed 1-like protein</fullName>
        <shortName>HN1-like protein</shortName>
    </alternativeName>
</protein>
<dbReference type="EMBL" id="AY323831">
    <property type="protein sequence ID" value="AAP72616.1"/>
    <property type="molecule type" value="Genomic_DNA"/>
</dbReference>
<dbReference type="EMBL" id="AY323978">
    <property type="protein sequence ID" value="AAP83791.1"/>
    <property type="molecule type" value="mRNA"/>
</dbReference>
<dbReference type="EMBL" id="AY323979">
    <property type="protein sequence ID" value="AAP83792.1"/>
    <property type="molecule type" value="mRNA"/>
</dbReference>
<dbReference type="EMBL" id="AY598330">
    <property type="protein sequence ID" value="AAT06741.1"/>
    <property type="molecule type" value="mRNA"/>
</dbReference>
<dbReference type="EMBL" id="AK023154">
    <property type="protein sequence ID" value="BAB14434.1"/>
    <property type="molecule type" value="mRNA"/>
</dbReference>
<dbReference type="EMBL" id="AE006639">
    <property type="protein sequence ID" value="AAK61289.1"/>
    <property type="molecule type" value="Genomic_DNA"/>
</dbReference>
<dbReference type="EMBL" id="AK296998">
    <property type="protein sequence ID" value="BAG59536.1"/>
    <property type="molecule type" value="mRNA"/>
</dbReference>
<dbReference type="EMBL" id="AL031009">
    <property type="status" value="NOT_ANNOTATED_CDS"/>
    <property type="molecule type" value="Genomic_DNA"/>
</dbReference>
<dbReference type="EMBL" id="AL031710">
    <property type="status" value="NOT_ANNOTATED_CDS"/>
    <property type="molecule type" value="Genomic_DNA"/>
</dbReference>
<dbReference type="EMBL" id="CH471112">
    <property type="protein sequence ID" value="EAW85635.1"/>
    <property type="molecule type" value="Genomic_DNA"/>
</dbReference>
<dbReference type="EMBL" id="CH471112">
    <property type="protein sequence ID" value="EAW85638.1"/>
    <property type="molecule type" value="Genomic_DNA"/>
</dbReference>
<dbReference type="EMBL" id="BC014438">
    <property type="protein sequence ID" value="AAH14438.1"/>
    <property type="molecule type" value="mRNA"/>
</dbReference>
<dbReference type="EMBL" id="BC060853">
    <property type="protein sequence ID" value="AAH60853.1"/>
    <property type="molecule type" value="mRNA"/>
</dbReference>
<dbReference type="CCDS" id="CCDS10441.1">
    <molecule id="Q9H910-1"/>
</dbReference>
<dbReference type="RefSeq" id="NP_001421594.1">
    <molecule id="Q9H910-3"/>
    <property type="nucleotide sequence ID" value="NM_001434665.1"/>
</dbReference>
<dbReference type="RefSeq" id="NP_653171.1">
    <molecule id="Q9H910-1"/>
    <property type="nucleotide sequence ID" value="NM_144570.3"/>
</dbReference>
<dbReference type="BioGRID" id="124774">
    <property type="interactions" value="58"/>
</dbReference>
<dbReference type="FunCoup" id="Q9H910">
    <property type="interactions" value="2606"/>
</dbReference>
<dbReference type="IntAct" id="Q9H910">
    <property type="interactions" value="16"/>
</dbReference>
<dbReference type="MINT" id="Q9H910"/>
<dbReference type="STRING" id="9606.ENSP00000248098"/>
<dbReference type="ChEMBL" id="CHEMBL4295946"/>
<dbReference type="TCDB" id="8.A.242.1.1">
    <property type="family name" value="the naadp-binding protein (jpt2) family"/>
</dbReference>
<dbReference type="GlyGen" id="Q9H910">
    <property type="glycosylation" value="9 sites, 2 O-linked glycans (8 sites)"/>
</dbReference>
<dbReference type="iPTMnet" id="Q9H910"/>
<dbReference type="MetOSite" id="Q9H910"/>
<dbReference type="PhosphoSitePlus" id="Q9H910"/>
<dbReference type="BioMuta" id="JPT2"/>
<dbReference type="jPOST" id="Q9H910"/>
<dbReference type="MassIVE" id="Q9H910"/>
<dbReference type="PaxDb" id="9606-ENSP00000248098"/>
<dbReference type="PeptideAtlas" id="Q9H910"/>
<dbReference type="ProteomicsDB" id="4534"/>
<dbReference type="ProteomicsDB" id="81270">
    <molecule id="Q9H910-1"/>
</dbReference>
<dbReference type="ProteomicsDB" id="81271">
    <molecule id="Q9H910-2"/>
</dbReference>
<dbReference type="Pumba" id="Q9H910"/>
<dbReference type="TopDownProteomics" id="Q9H910-1">
    <molecule id="Q9H910-1"/>
</dbReference>
<dbReference type="Antibodypedia" id="23196">
    <property type="antibodies" value="79 antibodies from 14 providers"/>
</dbReference>
<dbReference type="DNASU" id="90861"/>
<dbReference type="Ensembl" id="ENST00000248098.8">
    <molecule id="Q9H910-1"/>
    <property type="protein sequence ID" value="ENSP00000248098.3"/>
    <property type="gene ID" value="ENSG00000206053.13"/>
</dbReference>
<dbReference type="Ensembl" id="ENST00000382711.9">
    <molecule id="Q9H910-2"/>
    <property type="protein sequence ID" value="ENSP00000372158.5"/>
    <property type="gene ID" value="ENSG00000206053.13"/>
</dbReference>
<dbReference type="Ensembl" id="ENST00000562684.5">
    <molecule id="Q9H910-3"/>
    <property type="protein sequence ID" value="ENSP00000457694.1"/>
    <property type="gene ID" value="ENSG00000206053.13"/>
</dbReference>
<dbReference type="GeneID" id="90861"/>
<dbReference type="KEGG" id="hsa:90861"/>
<dbReference type="MANE-Select" id="ENST00000248098.8">
    <property type="protein sequence ID" value="ENSP00000248098.3"/>
    <property type="RefSeq nucleotide sequence ID" value="NM_144570.3"/>
    <property type="RefSeq protein sequence ID" value="NP_653171.1"/>
</dbReference>
<dbReference type="UCSC" id="uc002cmg.4">
    <molecule id="Q9H910-1"/>
    <property type="organism name" value="human"/>
</dbReference>
<dbReference type="UCSC" id="uc010uvi.3">
    <property type="organism name" value="human"/>
</dbReference>
<dbReference type="AGR" id="HGNC:14137"/>
<dbReference type="CTD" id="90861"/>
<dbReference type="DisGeNET" id="90861"/>
<dbReference type="GeneCards" id="JPT2"/>
<dbReference type="HGNC" id="HGNC:14137">
    <property type="gene designation" value="JPT2"/>
</dbReference>
<dbReference type="HPA" id="ENSG00000206053">
    <property type="expression patterns" value="Tissue enhanced (brain)"/>
</dbReference>
<dbReference type="MIM" id="619241">
    <property type="type" value="gene"/>
</dbReference>
<dbReference type="neXtProt" id="NX_Q9H910"/>
<dbReference type="OpenTargets" id="ENSG00000206053"/>
<dbReference type="PharmGKB" id="PA162391043"/>
<dbReference type="VEuPathDB" id="HostDB:ENSG00000206053"/>
<dbReference type="eggNOG" id="ENOG502S1G7">
    <property type="taxonomic scope" value="Eukaryota"/>
</dbReference>
<dbReference type="GeneTree" id="ENSGT00390000007652"/>
<dbReference type="HOGENOM" id="CLU_111612_0_0_1"/>
<dbReference type="InParanoid" id="Q9H910"/>
<dbReference type="OMA" id="RQFINPP"/>
<dbReference type="OrthoDB" id="6367565at2759"/>
<dbReference type="PAN-GO" id="Q9H910">
    <property type="GO annotations" value="1 GO annotation based on evolutionary models"/>
</dbReference>
<dbReference type="PhylomeDB" id="Q9H910"/>
<dbReference type="TreeFam" id="TF327169"/>
<dbReference type="PathwayCommons" id="Q9H910"/>
<dbReference type="SignaLink" id="Q9H910"/>
<dbReference type="BioGRID-ORCS" id="90861">
    <property type="hits" value="10 hits in 1144 CRISPR screens"/>
</dbReference>
<dbReference type="CD-CODE" id="DEE660B4">
    <property type="entry name" value="Stress granule"/>
</dbReference>
<dbReference type="ChiTaRS" id="HN1L">
    <property type="organism name" value="human"/>
</dbReference>
<dbReference type="GeneWiki" id="HN1L"/>
<dbReference type="GenomeRNAi" id="90861"/>
<dbReference type="Pharos" id="Q9H910">
    <property type="development level" value="Tbio"/>
</dbReference>
<dbReference type="PRO" id="PR:Q9H910"/>
<dbReference type="Proteomes" id="UP000005640">
    <property type="component" value="Chromosome 16"/>
</dbReference>
<dbReference type="RNAct" id="Q9H910">
    <property type="molecule type" value="protein"/>
</dbReference>
<dbReference type="Bgee" id="ENSG00000206053">
    <property type="expression patterns" value="Expressed in epithelium of bronchus and 199 other cell types or tissues"/>
</dbReference>
<dbReference type="ExpressionAtlas" id="Q9H910">
    <property type="expression patterns" value="baseline and differential"/>
</dbReference>
<dbReference type="GO" id="GO:0005737">
    <property type="term" value="C:cytoplasm"/>
    <property type="evidence" value="ECO:0000314"/>
    <property type="project" value="UniProtKB"/>
</dbReference>
<dbReference type="GO" id="GO:0005829">
    <property type="term" value="C:cytosol"/>
    <property type="evidence" value="ECO:0000314"/>
    <property type="project" value="HPA"/>
</dbReference>
<dbReference type="GO" id="GO:0005634">
    <property type="term" value="C:nucleus"/>
    <property type="evidence" value="ECO:0000314"/>
    <property type="project" value="UniProtKB"/>
</dbReference>
<dbReference type="GO" id="GO:0005886">
    <property type="term" value="C:plasma membrane"/>
    <property type="evidence" value="ECO:0000314"/>
    <property type="project" value="HPA"/>
</dbReference>
<dbReference type="GO" id="GO:0075509">
    <property type="term" value="P:endocytosis involved in viral entry into host cell"/>
    <property type="evidence" value="ECO:0000314"/>
    <property type="project" value="UniProtKB"/>
</dbReference>
<dbReference type="GO" id="GO:0050848">
    <property type="term" value="P:regulation of calcium-mediated signaling"/>
    <property type="evidence" value="ECO:0000315"/>
    <property type="project" value="UniProtKB"/>
</dbReference>
<dbReference type="InterPro" id="IPR033335">
    <property type="entry name" value="JUPITER"/>
</dbReference>
<dbReference type="PANTHER" id="PTHR34930">
    <property type="entry name" value="GEO05313P1"/>
    <property type="match status" value="1"/>
</dbReference>
<dbReference type="PANTHER" id="PTHR34930:SF5">
    <property type="entry name" value="JUPITER MICROTUBULE ASSOCIATED HOMOLOG 2"/>
    <property type="match status" value="1"/>
</dbReference>
<dbReference type="Pfam" id="PF17054">
    <property type="entry name" value="JUPITER"/>
    <property type="match status" value="1"/>
</dbReference>
<keyword id="KW-0007">Acetylation</keyword>
<keyword id="KW-0025">Alternative splicing</keyword>
<keyword id="KW-0963">Cytoplasm</keyword>
<keyword id="KW-0945">Host-virus interaction</keyword>
<keyword id="KW-0539">Nucleus</keyword>
<keyword id="KW-0597">Phosphoprotein</keyword>
<keyword id="KW-1267">Proteomics identification</keyword>
<keyword id="KW-1185">Reference proteome</keyword>
<proteinExistence type="evidence at protein level"/>
<accession>Q9H910</accession>
<accession>B1AJY2</accession>
<accession>B4DLH4</accession>
<accession>Q6EIC7</accession>
<gene>
    <name evidence="9" type="primary">JPT2</name>
    <name type="synonym">C16orf34</name>
    <name evidence="7" type="synonym">HN1L</name>
    <name type="ORF">L11</name>
</gene>
<evidence type="ECO:0000256" key="1">
    <source>
        <dbReference type="SAM" id="MobiDB-lite"/>
    </source>
</evidence>
<evidence type="ECO:0000269" key="2">
    <source>
    </source>
</evidence>
<evidence type="ECO:0000269" key="3">
    <source>
    </source>
</evidence>
<evidence type="ECO:0000269" key="4">
    <source>
    </source>
</evidence>
<evidence type="ECO:0000269" key="5">
    <source>
    </source>
</evidence>
<evidence type="ECO:0000303" key="6">
    <source>
    </source>
</evidence>
<evidence type="ECO:0000303" key="7">
    <source>
    </source>
</evidence>
<evidence type="ECO:0000305" key="8"/>
<evidence type="ECO:0000312" key="9">
    <source>
        <dbReference type="HGNC" id="HGNC:14137"/>
    </source>
</evidence>
<evidence type="ECO:0007744" key="10">
    <source>
    </source>
</evidence>
<evidence type="ECO:0007744" key="11">
    <source>
    </source>
</evidence>
<evidence type="ECO:0007744" key="12">
    <source>
    </source>
</evidence>
<evidence type="ECO:0007744" key="13">
    <source>
    </source>
</evidence>
<evidence type="ECO:0007744" key="14">
    <source>
    </source>
</evidence>
<evidence type="ECO:0007744" key="15">
    <source>
    </source>
</evidence>
<evidence type="ECO:0007744" key="16">
    <source>
    </source>
</evidence>
<evidence type="ECO:0007744" key="17">
    <source>
    </source>
</evidence>
<comment type="function">
    <text evidence="4 5">Nicotinic acid adenine dinucleotide phosphate (NAADP) binding protein required for NAADP-evoked intracellular calcium release (PubMed:33758061, PubMed:33758062). Confers NAADP-sensitivity to the two pore channels (TPCs) complex (PubMed:33758061). Enables NAADP to activate Ca(2+) release from the endoplasmic reticulum through ryanodine receptors (PubMed:33758062).</text>
</comment>
<comment type="function">
    <text evidence="4">(Microbial infection) Involved in the endolysosomal trafficking of human coronavirus SARS-CoV-2.</text>
</comment>
<comment type="subunit">
    <text evidence="4 5">Monomer (PubMed:33758062). Dimer (PubMed:33758062). Interacts with TPCN1 (PubMed:33758061).</text>
</comment>
<comment type="subcellular location">
    <subcellularLocation>
        <location evidence="2 5">Cytoplasm</location>
    </subcellularLocation>
    <subcellularLocation>
        <location evidence="2">Nucleus</location>
    </subcellularLocation>
    <text evidence="5">Colocalizes with type 1 ryanodine receptor (RYR1).</text>
</comment>
<comment type="alternative products">
    <event type="alternative splicing"/>
    <isoform>
        <id>Q9H910-1</id>
        <name>1</name>
        <name>HN1LA</name>
        <sequence type="displayed"/>
    </isoform>
    <isoform>
        <id>Q9H910-2</id>
        <name>2</name>
        <name>HN1LB</name>
        <name>HN1LC</name>
        <sequence type="described" ref="VSP_014706"/>
    </isoform>
    <isoform>
        <id>Q9H910-3</id>
        <name>3</name>
        <sequence type="described" ref="VSP_057423"/>
    </isoform>
</comment>
<comment type="tissue specificity">
    <text evidence="2">Expressed in liver, kidney, prostate, testis and uterus.</text>
</comment>
<comment type="induction">
    <text evidence="3">Up-regulated in squamous cell carcinoma (SCC) adenocarcinoma (AC), adenosquamous cell carcinoma (ASCC), bronchioalveolar carcinoma (BAC), breast and uterus tumors.</text>
</comment>
<comment type="similarity">
    <text evidence="8">Belongs to the JUPITER family.</text>
</comment>
<sequence>MFQVPDSEGGRAGSRAMKPPGGESSNLFGSPEEATPSSRPNRMASNIFGPTEEPQNIPKRTNPPGGKGSGIFDESTPVQTRQHLNPPGGKTSDIFGSPVTATSRLAHPNKPKDHVFLCEGEEPKSDLKAARSIPAGAEPGEKGSARKAGPAKEQEPMPTVDSHEPRLGPRPRSHNKVLNPPGGKSSISFY</sequence>